<protein>
    <recommendedName>
        <fullName evidence="1">ATP phosphoribosyltransferase</fullName>
        <shortName evidence="1">ATP-PRT</shortName>
        <shortName evidence="1">ATP-PRTase</shortName>
        <ecNumber evidence="1">2.4.2.17</ecNumber>
    </recommendedName>
</protein>
<keyword id="KW-0028">Amino-acid biosynthesis</keyword>
<keyword id="KW-0067">ATP-binding</keyword>
<keyword id="KW-0963">Cytoplasm</keyword>
<keyword id="KW-0328">Glycosyltransferase</keyword>
<keyword id="KW-0368">Histidine biosynthesis</keyword>
<keyword id="KW-0547">Nucleotide-binding</keyword>
<keyword id="KW-0808">Transferase</keyword>
<gene>
    <name evidence="1" type="primary">hisG</name>
    <name type="ordered locus">PFL_0928</name>
</gene>
<name>HIS1_PSEF5</name>
<feature type="chain" id="PRO_0000229326" description="ATP phosphoribosyltransferase">
    <location>
        <begin position="1"/>
        <end position="211"/>
    </location>
</feature>
<dbReference type="EC" id="2.4.2.17" evidence="1"/>
<dbReference type="EMBL" id="CP000076">
    <property type="protein sequence ID" value="AAY90215.1"/>
    <property type="molecule type" value="Genomic_DNA"/>
</dbReference>
<dbReference type="RefSeq" id="WP_011059282.1">
    <property type="nucleotide sequence ID" value="NC_004129.6"/>
</dbReference>
<dbReference type="SMR" id="Q4KI74"/>
<dbReference type="STRING" id="220664.PFL_0928"/>
<dbReference type="GeneID" id="57473931"/>
<dbReference type="KEGG" id="pfl:PFL_0928"/>
<dbReference type="PATRIC" id="fig|220664.5.peg.950"/>
<dbReference type="eggNOG" id="COG0040">
    <property type="taxonomic scope" value="Bacteria"/>
</dbReference>
<dbReference type="HOGENOM" id="CLU_038115_2_0_6"/>
<dbReference type="UniPathway" id="UPA00031">
    <property type="reaction ID" value="UER00006"/>
</dbReference>
<dbReference type="Proteomes" id="UP000008540">
    <property type="component" value="Chromosome"/>
</dbReference>
<dbReference type="GO" id="GO:0005737">
    <property type="term" value="C:cytoplasm"/>
    <property type="evidence" value="ECO:0007669"/>
    <property type="project" value="UniProtKB-SubCell"/>
</dbReference>
<dbReference type="GO" id="GO:0005524">
    <property type="term" value="F:ATP binding"/>
    <property type="evidence" value="ECO:0007669"/>
    <property type="project" value="UniProtKB-KW"/>
</dbReference>
<dbReference type="GO" id="GO:0003879">
    <property type="term" value="F:ATP phosphoribosyltransferase activity"/>
    <property type="evidence" value="ECO:0007669"/>
    <property type="project" value="UniProtKB-UniRule"/>
</dbReference>
<dbReference type="GO" id="GO:0000105">
    <property type="term" value="P:L-histidine biosynthetic process"/>
    <property type="evidence" value="ECO:0007669"/>
    <property type="project" value="UniProtKB-UniRule"/>
</dbReference>
<dbReference type="CDD" id="cd13595">
    <property type="entry name" value="PBP2_HisGs"/>
    <property type="match status" value="1"/>
</dbReference>
<dbReference type="FunFam" id="3.40.190.10:FF:000011">
    <property type="entry name" value="ATP phosphoribosyltransferase"/>
    <property type="match status" value="1"/>
</dbReference>
<dbReference type="FunFam" id="3.40.190.10:FF:000022">
    <property type="entry name" value="ATP phosphoribosyltransferase"/>
    <property type="match status" value="1"/>
</dbReference>
<dbReference type="Gene3D" id="3.40.190.10">
    <property type="entry name" value="Periplasmic binding protein-like II"/>
    <property type="match status" value="2"/>
</dbReference>
<dbReference type="HAMAP" id="MF_01018">
    <property type="entry name" value="HisG_Short"/>
    <property type="match status" value="1"/>
</dbReference>
<dbReference type="InterPro" id="IPR013820">
    <property type="entry name" value="ATP_PRibTrfase_cat"/>
</dbReference>
<dbReference type="InterPro" id="IPR018198">
    <property type="entry name" value="ATP_PRibTrfase_CS"/>
</dbReference>
<dbReference type="InterPro" id="IPR001348">
    <property type="entry name" value="ATP_PRibTrfase_HisG"/>
</dbReference>
<dbReference type="InterPro" id="IPR024893">
    <property type="entry name" value="ATP_PRibTrfase_HisG_short"/>
</dbReference>
<dbReference type="NCBIfam" id="TIGR00070">
    <property type="entry name" value="hisG"/>
    <property type="match status" value="1"/>
</dbReference>
<dbReference type="PANTHER" id="PTHR21403:SF8">
    <property type="entry name" value="ATP PHOSPHORIBOSYLTRANSFERASE"/>
    <property type="match status" value="1"/>
</dbReference>
<dbReference type="PANTHER" id="PTHR21403">
    <property type="entry name" value="ATP PHOSPHORIBOSYLTRANSFERASE ATP-PRTASE"/>
    <property type="match status" value="1"/>
</dbReference>
<dbReference type="Pfam" id="PF01634">
    <property type="entry name" value="HisG"/>
    <property type="match status" value="1"/>
</dbReference>
<dbReference type="SUPFAM" id="SSF53850">
    <property type="entry name" value="Periplasmic binding protein-like II"/>
    <property type="match status" value="1"/>
</dbReference>
<dbReference type="PROSITE" id="PS01316">
    <property type="entry name" value="ATP_P_PHORIBOSYLTR"/>
    <property type="match status" value="1"/>
</dbReference>
<reference key="1">
    <citation type="journal article" date="2005" name="Nat. Biotechnol.">
        <title>Complete genome sequence of the plant commensal Pseudomonas fluorescens Pf-5.</title>
        <authorList>
            <person name="Paulsen I.T."/>
            <person name="Press C.M."/>
            <person name="Ravel J."/>
            <person name="Kobayashi D.Y."/>
            <person name="Myers G.S.A."/>
            <person name="Mavrodi D.V."/>
            <person name="DeBoy R.T."/>
            <person name="Seshadri R."/>
            <person name="Ren Q."/>
            <person name="Madupu R."/>
            <person name="Dodson R.J."/>
            <person name="Durkin A.S."/>
            <person name="Brinkac L.M."/>
            <person name="Daugherty S.C."/>
            <person name="Sullivan S.A."/>
            <person name="Rosovitz M.J."/>
            <person name="Gwinn M.L."/>
            <person name="Zhou L."/>
            <person name="Schneider D.J."/>
            <person name="Cartinhour S.W."/>
            <person name="Nelson W.C."/>
            <person name="Weidman J."/>
            <person name="Watkins K."/>
            <person name="Tran K."/>
            <person name="Khouri H."/>
            <person name="Pierson E.A."/>
            <person name="Pierson L.S. III"/>
            <person name="Thomashow L.S."/>
            <person name="Loper J.E."/>
        </authorList>
    </citation>
    <scope>NUCLEOTIDE SEQUENCE [LARGE SCALE GENOMIC DNA]</scope>
    <source>
        <strain>ATCC BAA-477 / NRRL B-23932 / Pf-5</strain>
    </source>
</reference>
<sequence>MLTIALSKGRILDDTLPLLAEAGIVPTENPDKSRKLIIPTTQDDVRLLIVRATDVPTYVEHGAADLGVAGKDVLMEYTGQGLYEPLDLQIAQCKLMTAGAIGAAEPKGRLRVATKFVNVAKRYYAEQGRQVDIIKLYGSMELAPLIGLADKIIDVVDTGNTLRANGLEPQELIATISSRLVVNKASMKMQHARIQALIDTLRKAVESRHRG</sequence>
<organism>
    <name type="scientific">Pseudomonas fluorescens (strain ATCC BAA-477 / NRRL B-23932 / Pf-5)</name>
    <dbReference type="NCBI Taxonomy" id="220664"/>
    <lineage>
        <taxon>Bacteria</taxon>
        <taxon>Pseudomonadati</taxon>
        <taxon>Pseudomonadota</taxon>
        <taxon>Gammaproteobacteria</taxon>
        <taxon>Pseudomonadales</taxon>
        <taxon>Pseudomonadaceae</taxon>
        <taxon>Pseudomonas</taxon>
    </lineage>
</organism>
<evidence type="ECO:0000255" key="1">
    <source>
        <dbReference type="HAMAP-Rule" id="MF_01018"/>
    </source>
</evidence>
<proteinExistence type="inferred from homology"/>
<accession>Q4KI74</accession>
<comment type="function">
    <text evidence="1">Catalyzes the condensation of ATP and 5-phosphoribose 1-diphosphate to form N'-(5'-phosphoribosyl)-ATP (PR-ATP). Has a crucial role in the pathway because the rate of histidine biosynthesis seems to be controlled primarily by regulation of HisG enzymatic activity.</text>
</comment>
<comment type="catalytic activity">
    <reaction evidence="1">
        <text>1-(5-phospho-beta-D-ribosyl)-ATP + diphosphate = 5-phospho-alpha-D-ribose 1-diphosphate + ATP</text>
        <dbReference type="Rhea" id="RHEA:18473"/>
        <dbReference type="ChEBI" id="CHEBI:30616"/>
        <dbReference type="ChEBI" id="CHEBI:33019"/>
        <dbReference type="ChEBI" id="CHEBI:58017"/>
        <dbReference type="ChEBI" id="CHEBI:73183"/>
        <dbReference type="EC" id="2.4.2.17"/>
    </reaction>
</comment>
<comment type="pathway">
    <text evidence="1">Amino-acid biosynthesis; L-histidine biosynthesis; L-histidine from 5-phospho-alpha-D-ribose 1-diphosphate: step 1/9.</text>
</comment>
<comment type="subunit">
    <text evidence="1">Heteromultimer composed of HisG and HisZ subunits.</text>
</comment>
<comment type="subcellular location">
    <subcellularLocation>
        <location evidence="1">Cytoplasm</location>
    </subcellularLocation>
</comment>
<comment type="domain">
    <text>Lacks the C-terminal regulatory region which is replaced by HisZ.</text>
</comment>
<comment type="similarity">
    <text evidence="1">Belongs to the ATP phosphoribosyltransferase family. Short subfamily.</text>
</comment>